<keyword id="KW-0010">Activator</keyword>
<keyword id="KW-0025">Alternative splicing</keyword>
<keyword id="KW-0053">Apoptosis</keyword>
<keyword id="KW-0256">Endoplasmic reticulum</keyword>
<keyword id="KW-0551">Lipid droplet</keyword>
<keyword id="KW-0445">Lipid transport</keyword>
<keyword id="KW-0539">Nucleus</keyword>
<keyword id="KW-1267">Proteomics identification</keyword>
<keyword id="KW-1185">Reference proteome</keyword>
<keyword id="KW-0804">Transcription</keyword>
<keyword id="KW-0805">Transcription regulation</keyword>
<keyword id="KW-0813">Transport</keyword>
<keyword id="KW-0832">Ubl conjugation</keyword>
<comment type="function">
    <text evidence="1 4 5 7 8 9 10">Lipid transferase specifically expressed in white adipose tissue, which promotes unilocular lipid droplet formation by mediating lipid droplet fusion (PubMed:18334488, PubMed:19843876, PubMed:20049731, PubMed:23399566, PubMed:30361435). Lipid droplet fusion promotes their enlargement, restricting lipolysis and favoring lipid storage (PubMed:18334488, PubMed:19843876, PubMed:20049731, PubMed:23399566). Localizes on the lipid droplet surface, at focal contact sites between lipid droplets, and mediates atypical lipid droplet fusion by undergoing liquid-liquid phase separation (LLPS) and promoting directional net neutral lipid transfer from the smaller to larger lipid droplets (PubMed:18334488, PubMed:19843876, PubMed:20049731, PubMed:23399566). The transfer direction may be driven by the internal pressure difference between the contacting lipid droplet pair (PubMed:18334488, PubMed:19843876, PubMed:20049731, PubMed:23399566). Its role in neutral lipid transfer and lipid droplet enlargement is activated by the interaction with PLIN1 (PubMed:23399566). May also act as a CEBPB coactivator in the white adipose tissue to control the expression of a subset of CEBPB downstream target genes, including SOCS1, SOCS3, TGFB1, TGFBR1, ID2 and XDH (By similarity). When overexpressed in preadipocytes, induces apoptosis or increases cell susceptibility to apoptosis induced by serum deprivation or TGFB treatment (PubMed:12429024).</text>
</comment>
<comment type="catalytic activity">
    <reaction evidence="1">
        <text>a triacyl-sn-glycerol(in) = a triacyl-sn-glycerol(out)</text>
        <dbReference type="Rhea" id="RHEA:39011"/>
        <dbReference type="ChEBI" id="CHEBI:64615"/>
    </reaction>
</comment>
<comment type="subunit">
    <text evidence="1 2 7 9">Homodimer (By similarity). Homooligomer; undergoes liquid-liquid phase separation (LLPS) via its N-terminus, facilitating lipid droplet fusion, occurs at the lipid droplet contact sites (By similarity). Interacts with CIDEA (PubMed:19843876). Interacts with PLIN1 (PubMed:23399566). Interacts with NFAT5; this interaction is direct and retains NFAT5 in the cytoplasm (By similarity). Interacts with CEBPB (By similarity). Interacts with isoform CLSTN3beta of CLSTN3; inhibiting the lipid transferase activity of CIDEC (By similarity).</text>
</comment>
<comment type="interaction">
    <interactant intactId="EBI-14151404">
        <id>Q96AQ7</id>
    </interactant>
    <interactant intactId="EBI-10693436">
        <id>Q9BS75</id>
        <label>KLHL20</label>
    </interactant>
    <organismsDiffer>false</organismsDiffer>
    <experiments>3</experiments>
</comment>
<comment type="interaction">
    <interactant intactId="EBI-14151404">
        <id>Q96AQ7</id>
    </interactant>
    <interactant intactId="EBI-10174029">
        <id>A6NJ78-4</id>
        <label>METTL15</label>
    </interactant>
    <organismsDiffer>false</organismsDiffer>
    <experiments>3</experiments>
</comment>
<comment type="interaction">
    <interactant intactId="EBI-14151404">
        <id>Q96AQ7</id>
    </interactant>
    <interactant intactId="EBI-3910729">
        <id>Q15466</id>
        <label>NR0B2</label>
    </interactant>
    <organismsDiffer>false</organismsDiffer>
    <experiments>3</experiments>
</comment>
<comment type="interaction">
    <interactant intactId="EBI-14151404">
        <id>Q96AQ7</id>
    </interactant>
    <interactant intactId="EBI-10696971">
        <id>Q7Z6I5</id>
        <label>SPATA12</label>
    </interactant>
    <organismsDiffer>false</organismsDiffer>
    <experiments>3</experiments>
</comment>
<comment type="interaction">
    <interactant intactId="EBI-14151404">
        <id>Q96AQ7</id>
    </interactant>
    <interactant intactId="EBI-12068150">
        <id>Q6NVU6</id>
        <label>UFSP1</label>
    </interactant>
    <organismsDiffer>false</organismsDiffer>
    <experiments>3</experiments>
</comment>
<comment type="interaction">
    <interactant intactId="EBI-14151404">
        <id>Q96AQ7</id>
    </interactant>
    <interactant intactId="EBI-12287587">
        <id>B2RXF5</id>
        <label>ZBTB42</label>
    </interactant>
    <organismsDiffer>false</organismsDiffer>
    <experiments>3</experiments>
</comment>
<comment type="subcellular location">
    <subcellularLocation>
        <location evidence="5 9">Lipid droplet</location>
    </subcellularLocation>
    <subcellularLocation>
        <location evidence="1">Endoplasmic reticulum</location>
    </subcellularLocation>
    <subcellularLocation>
        <location evidence="1">Nucleus</location>
    </subcellularLocation>
    <text evidence="1">Diffuses quickly on lipid droplet surface, but becomes trapped and clustered at lipid droplet contact sites, thereby enabling its rapid enrichment at lipid droplet contact sites.</text>
</comment>
<comment type="alternative products">
    <event type="alternative splicing"/>
    <isoform>
        <id>Q96AQ7-1</id>
        <name>1</name>
        <name evidence="11">CIDE-3</name>
        <sequence type="displayed"/>
    </isoform>
    <isoform>
        <id>Q96AQ7-2</id>
        <name>2</name>
        <name evidence="11">CIDE-3alpha</name>
        <sequence type="described" ref="VSP_012738"/>
    </isoform>
    <isoform>
        <id>Q96AQ7-3</id>
        <name>3</name>
        <name evidence="11">CIDE-3beta</name>
        <sequence type="described" ref="VSP_012739 VSP_012740"/>
    </isoform>
    <isoform>
        <id>Q96AQ7-4</id>
        <name>4</name>
        <sequence type="described" ref="VSP_045051"/>
    </isoform>
</comment>
<comment type="tissue specificity">
    <text evidence="4 5">Expressed mainly in adipose tissue, small intestine, heart, colon and stomach and, at lower levels, in brain, kidney and liver.</text>
</comment>
<comment type="domain">
    <text evidence="1">The CIDE-N domain is involved in homodimerization which is crucial for its function in promoting lipid exchange and transfer.</text>
</comment>
<comment type="PTM">
    <text evidence="1">Ubiquitinated and targeted to proteasomal degradation, resulting in a short half-life (about 15 minutes in 3T3-L1 cells). Protein stability depends on triaclyglycerol synthesis, fatty acid availability and lipid droplet formation.</text>
</comment>
<comment type="disease">
    <text evidence="5 6">In omental adipose tissue of obese patients matched for BMI, expression levels tend to correlate with insulin sensitivity. Expression is increased 2-3 fold in the group of patients with high insulin sensitivity, compared to the insulin-resistant group. This observation is consistent with the idea that triglyceride storage in adipocytes plays an important role in sequestering triglycerides and fatty acids away from the circulation and peripheral tissues, thus enhancing insulin sensitivity in liver and muscle. This effect is not significant in subcutaneous adipose tissue (PubMed:18509062). In subcutaneous adipose tissue of diabetic patients, tends to negatively correlate with body mass index and total fat mass, independently of insulin sensitivity (PubMed:18334488).</text>
</comment>
<comment type="disease" evidence="8">
    <disease id="DI-03748">
        <name>Lipodystrophy, familial partial, 5</name>
        <acronym>FPLD5</acronym>
        <description>A form of lipodystrophy characterized by loss of subcutaneous adipose tissue affecting limb, femorogluteal and subcutaneous abdominal fat, preservation of visceral, neck and axilliary fat, hepatomegaly, hepatic steatosis and insulin-resistant diabetes.</description>
        <dbReference type="MIM" id="615238"/>
    </disease>
    <text>The disease is caused by variants affecting the gene represented in this entry.</text>
</comment>
<comment type="similarity">
    <text evidence="17">Belongs to the CIDE family.</text>
</comment>
<accession>Q96AQ7</accession>
<accession>C9JMN7</accession>
<accession>Q67DW9</accession>
<accession>Q9GZY9</accession>
<organism>
    <name type="scientific">Homo sapiens</name>
    <name type="common">Human</name>
    <dbReference type="NCBI Taxonomy" id="9606"/>
    <lineage>
        <taxon>Eukaryota</taxon>
        <taxon>Metazoa</taxon>
        <taxon>Chordata</taxon>
        <taxon>Craniata</taxon>
        <taxon>Vertebrata</taxon>
        <taxon>Euteleostomi</taxon>
        <taxon>Mammalia</taxon>
        <taxon>Eutheria</taxon>
        <taxon>Euarchontoglires</taxon>
        <taxon>Primates</taxon>
        <taxon>Haplorrhini</taxon>
        <taxon>Catarrhini</taxon>
        <taxon>Hominidae</taxon>
        <taxon>Homo</taxon>
    </lineage>
</organism>
<dbReference type="EMBL" id="AF303893">
    <property type="protein sequence ID" value="AAN32612.1"/>
    <property type="molecule type" value="mRNA"/>
</dbReference>
<dbReference type="EMBL" id="AY364640">
    <property type="protein sequence ID" value="AAQ65242.1"/>
    <property type="molecule type" value="mRNA"/>
</dbReference>
<dbReference type="EMBL" id="AY364638">
    <property type="protein sequence ID" value="AAR23106.1"/>
    <property type="molecule type" value="mRNA"/>
</dbReference>
<dbReference type="EMBL" id="AK024524">
    <property type="protein sequence ID" value="BAB14920.1"/>
    <property type="molecule type" value="mRNA"/>
</dbReference>
<dbReference type="EMBL" id="AK024530">
    <property type="protein sequence ID" value="BAB14922.1"/>
    <property type="molecule type" value="mRNA"/>
</dbReference>
<dbReference type="EMBL" id="AC018809">
    <property type="status" value="NOT_ANNOTATED_CDS"/>
    <property type="molecule type" value="Genomic_DNA"/>
</dbReference>
<dbReference type="EMBL" id="BC016851">
    <property type="protein sequence ID" value="AAH16851.1"/>
    <property type="molecule type" value="mRNA"/>
</dbReference>
<dbReference type="EMBL" id="CD518729">
    <property type="status" value="NOT_ANNOTATED_CDS"/>
    <property type="molecule type" value="mRNA"/>
</dbReference>
<dbReference type="CCDS" id="CCDS2587.1">
    <molecule id="Q96AQ7-1"/>
</dbReference>
<dbReference type="CCDS" id="CCDS56239.1">
    <molecule id="Q96AQ7-4"/>
</dbReference>
<dbReference type="CCDS" id="CCDS82731.1">
    <molecule id="Q96AQ7-2"/>
</dbReference>
<dbReference type="RefSeq" id="NP_001186480.1">
    <molecule id="Q96AQ7-4"/>
    <property type="nucleotide sequence ID" value="NM_001199551.2"/>
</dbReference>
<dbReference type="RefSeq" id="NP_001186481.1">
    <molecule id="Q96AQ7-1"/>
    <property type="nucleotide sequence ID" value="NM_001199552.2"/>
</dbReference>
<dbReference type="RefSeq" id="NP_001186552.1">
    <property type="nucleotide sequence ID" value="NM_001199623.1"/>
</dbReference>
<dbReference type="RefSeq" id="NP_001308071.1">
    <molecule id="Q96AQ7-1"/>
    <property type="nucleotide sequence ID" value="NM_001321142.2"/>
</dbReference>
<dbReference type="RefSeq" id="NP_001308072.1">
    <molecule id="Q96AQ7-2"/>
    <property type="nucleotide sequence ID" value="NM_001321143.2"/>
</dbReference>
<dbReference type="RefSeq" id="NP_001308073.1">
    <molecule id="Q96AQ7-2"/>
    <property type="nucleotide sequence ID" value="NM_001321144.2"/>
</dbReference>
<dbReference type="RefSeq" id="NP_001365420.1">
    <molecule id="Q96AQ7-1"/>
    <property type="nucleotide sequence ID" value="NM_001378491.1"/>
</dbReference>
<dbReference type="RefSeq" id="NP_071377.2">
    <molecule id="Q96AQ7-1"/>
    <property type="nucleotide sequence ID" value="NM_022094.3"/>
</dbReference>
<dbReference type="RefSeq" id="XP_047304641.1">
    <molecule id="Q96AQ7-1"/>
    <property type="nucleotide sequence ID" value="XM_047448685.1"/>
</dbReference>
<dbReference type="RefSeq" id="XP_047304642.1">
    <molecule id="Q96AQ7-2"/>
    <property type="nucleotide sequence ID" value="XM_047448686.1"/>
</dbReference>
<dbReference type="RefSeq" id="XP_054203465.1">
    <molecule id="Q96AQ7-2"/>
    <property type="nucleotide sequence ID" value="XM_054347490.1"/>
</dbReference>
<dbReference type="BioGRID" id="121993">
    <property type="interactions" value="22"/>
</dbReference>
<dbReference type="FunCoup" id="Q96AQ7">
    <property type="interactions" value="60"/>
</dbReference>
<dbReference type="IntAct" id="Q96AQ7">
    <property type="interactions" value="9"/>
</dbReference>
<dbReference type="STRING" id="9606.ENSP00000373328"/>
<dbReference type="iPTMnet" id="Q96AQ7"/>
<dbReference type="PhosphoSitePlus" id="Q96AQ7"/>
<dbReference type="BioMuta" id="CIDEC"/>
<dbReference type="DMDM" id="20138281"/>
<dbReference type="jPOST" id="Q96AQ7"/>
<dbReference type="MassIVE" id="Q96AQ7"/>
<dbReference type="PaxDb" id="9606-ENSP00000373328"/>
<dbReference type="PeptideAtlas" id="Q96AQ7"/>
<dbReference type="ProteomicsDB" id="10869"/>
<dbReference type="ProteomicsDB" id="75990">
    <molecule id="Q96AQ7-1"/>
</dbReference>
<dbReference type="ProteomicsDB" id="75992">
    <molecule id="Q96AQ7-3"/>
</dbReference>
<dbReference type="Antibodypedia" id="10363">
    <property type="antibodies" value="306 antibodies from 33 providers"/>
</dbReference>
<dbReference type="DNASU" id="63924"/>
<dbReference type="Ensembl" id="ENST00000336832.7">
    <molecule id="Q96AQ7-1"/>
    <property type="protein sequence ID" value="ENSP00000338642.2"/>
    <property type="gene ID" value="ENSG00000187288.12"/>
</dbReference>
<dbReference type="Ensembl" id="ENST00000423850.5">
    <molecule id="Q96AQ7-2"/>
    <property type="protein sequence ID" value="ENSP00000400649.1"/>
    <property type="gene ID" value="ENSG00000187288.12"/>
</dbReference>
<dbReference type="Ensembl" id="ENST00000430427.6">
    <molecule id="Q96AQ7-4"/>
    <property type="protein sequence ID" value="ENSP00000408631.1"/>
    <property type="gene ID" value="ENSG00000187288.12"/>
</dbReference>
<dbReference type="Ensembl" id="ENST00000455015.6">
    <molecule id="Q96AQ7-2"/>
    <property type="protein sequence ID" value="ENSP00000392975.1"/>
    <property type="gene ID" value="ENSG00000187288.12"/>
</dbReference>
<dbReference type="Ensembl" id="ENST00000618572.4">
    <molecule id="Q96AQ7-4"/>
    <property type="protein sequence ID" value="ENSP00000483641.1"/>
    <property type="gene ID" value="ENSG00000187288.12"/>
</dbReference>
<dbReference type="Ensembl" id="ENST00000675828.1">
    <molecule id="Q96AQ7-1"/>
    <property type="protein sequence ID" value="ENSP00000502377.1"/>
    <property type="gene ID" value="ENSG00000187288.12"/>
</dbReference>
<dbReference type="Ensembl" id="ENST00000679265.1">
    <molecule id="Q96AQ7-1"/>
    <property type="protein sequence ID" value="ENSP00000504614.1"/>
    <property type="gene ID" value="ENSG00000187288.12"/>
</dbReference>
<dbReference type="GeneID" id="63924"/>
<dbReference type="KEGG" id="hsa:63924"/>
<dbReference type="MANE-Select" id="ENST00000336832.7">
    <property type="protein sequence ID" value="ENSP00000338642.2"/>
    <property type="RefSeq nucleotide sequence ID" value="NM_001321142.2"/>
    <property type="RefSeq protein sequence ID" value="NP_001308071.1"/>
</dbReference>
<dbReference type="UCSC" id="uc003btq.4">
    <molecule id="Q96AQ7-1"/>
    <property type="organism name" value="human"/>
</dbReference>
<dbReference type="AGR" id="HGNC:24229"/>
<dbReference type="CTD" id="63924"/>
<dbReference type="DisGeNET" id="63924"/>
<dbReference type="GeneCards" id="CIDEC"/>
<dbReference type="HGNC" id="HGNC:24229">
    <property type="gene designation" value="CIDEC"/>
</dbReference>
<dbReference type="HPA" id="ENSG00000187288">
    <property type="expression patterns" value="Group enriched (adipose tissue, breast)"/>
</dbReference>
<dbReference type="MalaCards" id="CIDEC"/>
<dbReference type="MIM" id="612120">
    <property type="type" value="gene"/>
</dbReference>
<dbReference type="MIM" id="615238">
    <property type="type" value="phenotype"/>
</dbReference>
<dbReference type="neXtProt" id="NX_Q96AQ7"/>
<dbReference type="OpenTargets" id="ENSG00000187288"/>
<dbReference type="Orphanet" id="435651">
    <property type="disease" value="CIDEC-related familial partial lipodystrophy"/>
</dbReference>
<dbReference type="PharmGKB" id="PA134923736"/>
<dbReference type="VEuPathDB" id="HostDB:ENSG00000187288"/>
<dbReference type="eggNOG" id="ENOG502QU28">
    <property type="taxonomic scope" value="Eukaryota"/>
</dbReference>
<dbReference type="GeneTree" id="ENSGT00390000018596"/>
<dbReference type="HOGENOM" id="CLU_090011_1_0_1"/>
<dbReference type="InParanoid" id="Q96AQ7"/>
<dbReference type="OMA" id="CYHAKRM"/>
<dbReference type="OrthoDB" id="6475906at2759"/>
<dbReference type="PAN-GO" id="Q96AQ7">
    <property type="GO annotations" value="1 GO annotation based on evolutionary models"/>
</dbReference>
<dbReference type="PhylomeDB" id="Q96AQ7"/>
<dbReference type="TreeFam" id="TF334321"/>
<dbReference type="PathwayCommons" id="Q96AQ7"/>
<dbReference type="Reactome" id="R-HSA-8963889">
    <molecule id="Q96AQ7-1"/>
    <property type="pathway name" value="Assembly of active LPL and LIPC lipase complexes"/>
</dbReference>
<dbReference type="Reactome" id="R-HSA-8964572">
    <property type="pathway name" value="Lipid particle organization"/>
</dbReference>
<dbReference type="Reactome" id="R-HSA-9841922">
    <property type="pathway name" value="MLL4 and MLL3 complexes regulate expression of PPARG target genes in adipogenesis and hepatic steatosis"/>
</dbReference>
<dbReference type="SignaLink" id="Q96AQ7"/>
<dbReference type="BioGRID-ORCS" id="63924">
    <property type="hits" value="18 hits in 1153 CRISPR screens"/>
</dbReference>
<dbReference type="ChiTaRS" id="CIDEC">
    <property type="organism name" value="human"/>
</dbReference>
<dbReference type="GenomeRNAi" id="63924"/>
<dbReference type="Pharos" id="Q96AQ7">
    <property type="development level" value="Tbio"/>
</dbReference>
<dbReference type="PRO" id="PR:Q96AQ7"/>
<dbReference type="Proteomes" id="UP000005640">
    <property type="component" value="Chromosome 3"/>
</dbReference>
<dbReference type="RNAct" id="Q96AQ7">
    <property type="molecule type" value="protein"/>
</dbReference>
<dbReference type="Bgee" id="ENSG00000187288">
    <property type="expression patterns" value="Expressed in subcutaneous adipose tissue and 129 other cell types or tissues"/>
</dbReference>
<dbReference type="ExpressionAtlas" id="Q96AQ7">
    <property type="expression patterns" value="baseline and differential"/>
</dbReference>
<dbReference type="GO" id="GO:0005829">
    <property type="term" value="C:cytosol"/>
    <property type="evidence" value="ECO:0000314"/>
    <property type="project" value="UniProtKB"/>
</dbReference>
<dbReference type="GO" id="GO:0005783">
    <property type="term" value="C:endoplasmic reticulum"/>
    <property type="evidence" value="ECO:0007669"/>
    <property type="project" value="UniProtKB-SubCell"/>
</dbReference>
<dbReference type="GO" id="GO:0005811">
    <property type="term" value="C:lipid droplet"/>
    <property type="evidence" value="ECO:0000314"/>
    <property type="project" value="UniProtKB"/>
</dbReference>
<dbReference type="GO" id="GO:0005634">
    <property type="term" value="C:nucleus"/>
    <property type="evidence" value="ECO:0007669"/>
    <property type="project" value="UniProtKB-SubCell"/>
</dbReference>
<dbReference type="GO" id="GO:0120013">
    <property type="term" value="F:lipid transfer activity"/>
    <property type="evidence" value="ECO:0000250"/>
    <property type="project" value="UniProtKB"/>
</dbReference>
<dbReference type="GO" id="GO:0140693">
    <property type="term" value="F:molecular condensate scaffold activity"/>
    <property type="evidence" value="ECO:0000250"/>
    <property type="project" value="UniProtKB"/>
</dbReference>
<dbReference type="GO" id="GO:0070300">
    <property type="term" value="F:phosphatidic acid binding"/>
    <property type="evidence" value="ECO:0000250"/>
    <property type="project" value="UniProtKB"/>
</dbReference>
<dbReference type="GO" id="GO:0006915">
    <property type="term" value="P:apoptotic process"/>
    <property type="evidence" value="ECO:0000314"/>
    <property type="project" value="MGI"/>
</dbReference>
<dbReference type="GO" id="GO:0097194">
    <property type="term" value="P:execution phase of apoptosis"/>
    <property type="evidence" value="ECO:0000314"/>
    <property type="project" value="UniProtKB"/>
</dbReference>
<dbReference type="GO" id="GO:0160077">
    <property type="term" value="P:lipid droplet fusion"/>
    <property type="evidence" value="ECO:0000314"/>
    <property type="project" value="UniProtKB"/>
</dbReference>
<dbReference type="GO" id="GO:0034389">
    <property type="term" value="P:lipid droplet organization"/>
    <property type="evidence" value="ECO:0000315"/>
    <property type="project" value="UniProtKB"/>
</dbReference>
<dbReference type="GO" id="GO:0019915">
    <property type="term" value="P:lipid storage"/>
    <property type="evidence" value="ECO:0000314"/>
    <property type="project" value="UniProtKB"/>
</dbReference>
<dbReference type="GO" id="GO:0050995">
    <property type="term" value="P:negative regulation of lipid catabolic process"/>
    <property type="evidence" value="ECO:0000314"/>
    <property type="project" value="UniProtKB"/>
</dbReference>
<dbReference type="GO" id="GO:0090209">
    <property type="term" value="P:negative regulation of triglyceride metabolic process"/>
    <property type="evidence" value="ECO:0000250"/>
    <property type="project" value="UniProtKB"/>
</dbReference>
<dbReference type="GO" id="GO:0042981">
    <property type="term" value="P:regulation of apoptotic process"/>
    <property type="evidence" value="ECO:0000318"/>
    <property type="project" value="GO_Central"/>
</dbReference>
<dbReference type="FunFam" id="3.10.20.10:FF:000004">
    <property type="entry name" value="cell death activator CIDE-3 isoform X1"/>
    <property type="match status" value="1"/>
</dbReference>
<dbReference type="Gene3D" id="3.10.20.10">
    <property type="match status" value="1"/>
</dbReference>
<dbReference type="InterPro" id="IPR003508">
    <property type="entry name" value="CIDE-N_dom"/>
</dbReference>
<dbReference type="PANTHER" id="PTHR12306">
    <property type="entry name" value="CELL DEATH ACTIVATOR CIDE"/>
    <property type="match status" value="1"/>
</dbReference>
<dbReference type="PANTHER" id="PTHR12306:SF9">
    <property type="entry name" value="LIPID TRANSFERASE CIDEC"/>
    <property type="match status" value="1"/>
</dbReference>
<dbReference type="Pfam" id="PF02017">
    <property type="entry name" value="CIDE-N"/>
    <property type="match status" value="1"/>
</dbReference>
<dbReference type="SMART" id="SM00266">
    <property type="entry name" value="CAD"/>
    <property type="match status" value="1"/>
</dbReference>
<dbReference type="SUPFAM" id="SSF54277">
    <property type="entry name" value="CAD &amp; PB1 domains"/>
    <property type="match status" value="1"/>
</dbReference>
<dbReference type="PROSITE" id="PS51135">
    <property type="entry name" value="CIDE_N"/>
    <property type="match status" value="1"/>
</dbReference>
<sequence>MEYAMKSLSLLYPKSLSRHVSVRTSVVTQQLLSEPSPKAPRARPCRVSTADRSVRKGIMAYSLEDLLLKVRDTLMLADKPFFLVLEEDGTTVETEEYFQALAGDTVFMVLQKGQKWQPPSEQGTRHPLSLSHKPAKKIDVARVTFDLYKLNPQDFIGCLNVKATFYDTYSLSYDLHCCGAKRIMKEAFRWALFSMQATGHVLLGTSCYLQQLLDATEEGQPPKGKASSLIPTCLKILQ</sequence>
<reference key="1">
    <citation type="journal article" date="2003" name="Biochem. J.">
        <title>Molecular cloning and characterization of CIDE-3, a novel member of the cell-death-inducing DNA-fragmentation-factor (DFF45)-like effector family.</title>
        <authorList>
            <person name="Liang L."/>
            <person name="Zhao M."/>
            <person name="Xu Z."/>
            <person name="Yokoyama K.K."/>
            <person name="Li T."/>
        </authorList>
    </citation>
    <scope>NUCLEOTIDE SEQUENCE [MRNA] (ISOFORMS 1 AND 2)</scope>
    <scope>FUNCTION IN APOPTOSIS</scope>
    <scope>TISSUE SPECIFICITY</scope>
</reference>
<reference key="2">
    <citation type="submission" date="2003-08" db="EMBL/GenBank/DDBJ databases">
        <authorList>
            <person name="Liang L."/>
            <person name="Xu Z."/>
            <person name="Li T."/>
            <person name="Zhao M."/>
        </authorList>
    </citation>
    <scope>NUCLEOTIDE SEQUENCE [MRNA] (ISOFORM 3)</scope>
</reference>
<reference key="3">
    <citation type="journal article" date="2004" name="Nat. Genet.">
        <title>Complete sequencing and characterization of 21,243 full-length human cDNAs.</title>
        <authorList>
            <person name="Ota T."/>
            <person name="Suzuki Y."/>
            <person name="Nishikawa T."/>
            <person name="Otsuki T."/>
            <person name="Sugiyama T."/>
            <person name="Irie R."/>
            <person name="Wakamatsu A."/>
            <person name="Hayashi K."/>
            <person name="Sato H."/>
            <person name="Nagai K."/>
            <person name="Kimura K."/>
            <person name="Makita H."/>
            <person name="Sekine M."/>
            <person name="Obayashi M."/>
            <person name="Nishi T."/>
            <person name="Shibahara T."/>
            <person name="Tanaka T."/>
            <person name="Ishii S."/>
            <person name="Yamamoto J."/>
            <person name="Saito K."/>
            <person name="Kawai Y."/>
            <person name="Isono Y."/>
            <person name="Nakamura Y."/>
            <person name="Nagahari K."/>
            <person name="Murakami K."/>
            <person name="Yasuda T."/>
            <person name="Iwayanagi T."/>
            <person name="Wagatsuma M."/>
            <person name="Shiratori A."/>
            <person name="Sudo H."/>
            <person name="Hosoiri T."/>
            <person name="Kaku Y."/>
            <person name="Kodaira H."/>
            <person name="Kondo H."/>
            <person name="Sugawara M."/>
            <person name="Takahashi M."/>
            <person name="Kanda K."/>
            <person name="Yokoi T."/>
            <person name="Furuya T."/>
            <person name="Kikkawa E."/>
            <person name="Omura Y."/>
            <person name="Abe K."/>
            <person name="Kamihara K."/>
            <person name="Katsuta N."/>
            <person name="Sato K."/>
            <person name="Tanikawa M."/>
            <person name="Yamazaki M."/>
            <person name="Ninomiya K."/>
            <person name="Ishibashi T."/>
            <person name="Yamashita H."/>
            <person name="Murakawa K."/>
            <person name="Fujimori K."/>
            <person name="Tanai H."/>
            <person name="Kimata M."/>
            <person name="Watanabe M."/>
            <person name="Hiraoka S."/>
            <person name="Chiba Y."/>
            <person name="Ishida S."/>
            <person name="Ono Y."/>
            <person name="Takiguchi S."/>
            <person name="Watanabe S."/>
            <person name="Yosida M."/>
            <person name="Hotuta T."/>
            <person name="Kusano J."/>
            <person name="Kanehori K."/>
            <person name="Takahashi-Fujii A."/>
            <person name="Hara H."/>
            <person name="Tanase T.-O."/>
            <person name="Nomura Y."/>
            <person name="Togiya S."/>
            <person name="Komai F."/>
            <person name="Hara R."/>
            <person name="Takeuchi K."/>
            <person name="Arita M."/>
            <person name="Imose N."/>
            <person name="Musashino K."/>
            <person name="Yuuki H."/>
            <person name="Oshima A."/>
            <person name="Sasaki N."/>
            <person name="Aotsuka S."/>
            <person name="Yoshikawa Y."/>
            <person name="Matsunawa H."/>
            <person name="Ichihara T."/>
            <person name="Shiohata N."/>
            <person name="Sano S."/>
            <person name="Moriya S."/>
            <person name="Momiyama H."/>
            <person name="Satoh N."/>
            <person name="Takami S."/>
            <person name="Terashima Y."/>
            <person name="Suzuki O."/>
            <person name="Nakagawa S."/>
            <person name="Senoh A."/>
            <person name="Mizoguchi H."/>
            <person name="Goto Y."/>
            <person name="Shimizu F."/>
            <person name="Wakebe H."/>
            <person name="Hishigaki H."/>
            <person name="Watanabe T."/>
            <person name="Sugiyama A."/>
            <person name="Takemoto M."/>
            <person name="Kawakami B."/>
            <person name="Yamazaki M."/>
            <person name="Watanabe K."/>
            <person name="Kumagai A."/>
            <person name="Itakura S."/>
            <person name="Fukuzumi Y."/>
            <person name="Fujimori Y."/>
            <person name="Komiyama M."/>
            <person name="Tashiro H."/>
            <person name="Tanigami A."/>
            <person name="Fujiwara T."/>
            <person name="Ono T."/>
            <person name="Yamada K."/>
            <person name="Fujii Y."/>
            <person name="Ozaki K."/>
            <person name="Hirao M."/>
            <person name="Ohmori Y."/>
            <person name="Kawabata A."/>
            <person name="Hikiji T."/>
            <person name="Kobatake N."/>
            <person name="Inagaki H."/>
            <person name="Ikema Y."/>
            <person name="Okamoto S."/>
            <person name="Okitani R."/>
            <person name="Kawakami T."/>
            <person name="Noguchi S."/>
            <person name="Itoh T."/>
            <person name="Shigeta K."/>
            <person name="Senba T."/>
            <person name="Matsumura K."/>
            <person name="Nakajima Y."/>
            <person name="Mizuno T."/>
            <person name="Morinaga M."/>
            <person name="Sasaki M."/>
            <person name="Togashi T."/>
            <person name="Oyama M."/>
            <person name="Hata H."/>
            <person name="Watanabe M."/>
            <person name="Komatsu T."/>
            <person name="Mizushima-Sugano J."/>
            <person name="Satoh T."/>
            <person name="Shirai Y."/>
            <person name="Takahashi Y."/>
            <person name="Nakagawa K."/>
            <person name="Okumura K."/>
            <person name="Nagase T."/>
            <person name="Nomura N."/>
            <person name="Kikuchi H."/>
            <person name="Masuho Y."/>
            <person name="Yamashita R."/>
            <person name="Nakai K."/>
            <person name="Yada T."/>
            <person name="Nakamura Y."/>
            <person name="Ohara O."/>
            <person name="Isogai T."/>
            <person name="Sugano S."/>
        </authorList>
    </citation>
    <scope>NUCLEOTIDE SEQUENCE [LARGE SCALE MRNA] (ISOFORM 2)</scope>
    <source>
        <tissue>Adipose tissue</tissue>
    </source>
</reference>
<reference key="4">
    <citation type="journal article" date="2006" name="Nature">
        <title>The DNA sequence, annotation and analysis of human chromosome 3.</title>
        <authorList>
            <person name="Muzny D.M."/>
            <person name="Scherer S.E."/>
            <person name="Kaul R."/>
            <person name="Wang J."/>
            <person name="Yu J."/>
            <person name="Sudbrak R."/>
            <person name="Buhay C.J."/>
            <person name="Chen R."/>
            <person name="Cree A."/>
            <person name="Ding Y."/>
            <person name="Dugan-Rocha S."/>
            <person name="Gill R."/>
            <person name="Gunaratne P."/>
            <person name="Harris R.A."/>
            <person name="Hawes A.C."/>
            <person name="Hernandez J."/>
            <person name="Hodgson A.V."/>
            <person name="Hume J."/>
            <person name="Jackson A."/>
            <person name="Khan Z.M."/>
            <person name="Kovar-Smith C."/>
            <person name="Lewis L.R."/>
            <person name="Lozado R.J."/>
            <person name="Metzker M.L."/>
            <person name="Milosavljevic A."/>
            <person name="Miner G.R."/>
            <person name="Morgan M.B."/>
            <person name="Nazareth L.V."/>
            <person name="Scott G."/>
            <person name="Sodergren E."/>
            <person name="Song X.-Z."/>
            <person name="Steffen D."/>
            <person name="Wei S."/>
            <person name="Wheeler D.A."/>
            <person name="Wright M.W."/>
            <person name="Worley K.C."/>
            <person name="Yuan Y."/>
            <person name="Zhang Z."/>
            <person name="Adams C.Q."/>
            <person name="Ansari-Lari M.A."/>
            <person name="Ayele M."/>
            <person name="Brown M.J."/>
            <person name="Chen G."/>
            <person name="Chen Z."/>
            <person name="Clendenning J."/>
            <person name="Clerc-Blankenburg K.P."/>
            <person name="Chen R."/>
            <person name="Chen Z."/>
            <person name="Davis C."/>
            <person name="Delgado O."/>
            <person name="Dinh H.H."/>
            <person name="Dong W."/>
            <person name="Draper H."/>
            <person name="Ernst S."/>
            <person name="Fu G."/>
            <person name="Gonzalez-Garay M.L."/>
            <person name="Garcia D.K."/>
            <person name="Gillett W."/>
            <person name="Gu J."/>
            <person name="Hao B."/>
            <person name="Haugen E."/>
            <person name="Havlak P."/>
            <person name="He X."/>
            <person name="Hennig S."/>
            <person name="Hu S."/>
            <person name="Huang W."/>
            <person name="Jackson L.R."/>
            <person name="Jacob L.S."/>
            <person name="Kelly S.H."/>
            <person name="Kube M."/>
            <person name="Levy R."/>
            <person name="Li Z."/>
            <person name="Liu B."/>
            <person name="Liu J."/>
            <person name="Liu W."/>
            <person name="Lu J."/>
            <person name="Maheshwari M."/>
            <person name="Nguyen B.-V."/>
            <person name="Okwuonu G.O."/>
            <person name="Palmeiri A."/>
            <person name="Pasternak S."/>
            <person name="Perez L.M."/>
            <person name="Phelps K.A."/>
            <person name="Plopper F.J."/>
            <person name="Qiang B."/>
            <person name="Raymond C."/>
            <person name="Rodriguez R."/>
            <person name="Saenphimmachak C."/>
            <person name="Santibanez J."/>
            <person name="Shen H."/>
            <person name="Shen Y."/>
            <person name="Subramanian S."/>
            <person name="Tabor P.E."/>
            <person name="Verduzco D."/>
            <person name="Waldron L."/>
            <person name="Wang J."/>
            <person name="Wang J."/>
            <person name="Wang Q."/>
            <person name="Williams G.A."/>
            <person name="Wong G.K.-S."/>
            <person name="Yao Z."/>
            <person name="Zhang J."/>
            <person name="Zhang X."/>
            <person name="Zhao G."/>
            <person name="Zhou J."/>
            <person name="Zhou Y."/>
            <person name="Nelson D."/>
            <person name="Lehrach H."/>
            <person name="Reinhardt R."/>
            <person name="Naylor S.L."/>
            <person name="Yang H."/>
            <person name="Olson M."/>
            <person name="Weinstock G."/>
            <person name="Gibbs R.A."/>
        </authorList>
    </citation>
    <scope>NUCLEOTIDE SEQUENCE [LARGE SCALE GENOMIC DNA]</scope>
</reference>
<reference key="5">
    <citation type="journal article" date="2004" name="Genome Res.">
        <title>The status, quality, and expansion of the NIH full-length cDNA project: the Mammalian Gene Collection (MGC).</title>
        <authorList>
            <consortium name="The MGC Project Team"/>
        </authorList>
    </citation>
    <scope>NUCLEOTIDE SEQUENCE [LARGE SCALE MRNA] (ISOFORMS 1 AND 4)</scope>
    <source>
        <tissue>Brain</tissue>
        <tissue>Colon</tissue>
    </source>
</reference>
<reference key="6">
    <citation type="journal article" date="2008" name="J. Biol. Chem.">
        <title>Fat-specific protein 27 regulates storage of triacylglycerol.</title>
        <authorList>
            <person name="Keller P."/>
            <person name="Petrie J.T."/>
            <person name="De Rose P."/>
            <person name="Gerin I."/>
            <person name="Wright W.S."/>
            <person name="Chiang S.H."/>
            <person name="Nielsen A.R."/>
            <person name="Fischer C.P."/>
            <person name="Pedersen B.K."/>
            <person name="MacDougald O.A."/>
        </authorList>
    </citation>
    <scope>FUNCTION</scope>
    <scope>SUBCELLULAR LOCATION</scope>
    <scope>TISSUE SPECIFICITY</scope>
    <scope>DISEASE</scope>
</reference>
<reference key="7">
    <citation type="journal article" date="2008" name="Proc. Natl. Acad. Sci. U.S.A.">
        <title>Cidea is associated with lipid droplets and insulin sensitivity in humans.</title>
        <authorList>
            <person name="Puri V."/>
            <person name="Ranjit S."/>
            <person name="Konda S."/>
            <person name="Nicoloro S.M."/>
            <person name="Straubhaar J."/>
            <person name="Chawla A."/>
            <person name="Chouinard M."/>
            <person name="Lin C."/>
            <person name="Burkart A."/>
            <person name="Corvera S."/>
            <person name="Perugini R.A."/>
            <person name="Czech M.P."/>
        </authorList>
    </citation>
    <scope>DISEASE</scope>
</reference>
<reference key="8">
    <citation type="journal article" date="2009" name="Am. J. Physiol.">
        <title>Functional analysis of FSP27 protein regions for lipid droplet localization, caspase-dependent apoptosis, and dimerization with CIDEA.</title>
        <authorList>
            <person name="Liu K."/>
            <person name="Zhou S."/>
            <person name="Kim J.Y."/>
            <person name="Tillison K."/>
            <person name="Majors D."/>
            <person name="Rearick D."/>
            <person name="Lee J.H."/>
            <person name="Fernandez-Boyanapalli R.F."/>
            <person name="Barricklow K."/>
            <person name="Houston M.S."/>
            <person name="Smas C.M."/>
        </authorList>
    </citation>
    <scope>FUNCTION</scope>
    <scope>INTERACTION WITH CIDEA</scope>
</reference>
<reference key="9">
    <citation type="journal article" date="2009" name="EMBO Mol. Med.">
        <title>Partial lipodystrophy and insulin resistant diabetes in a patient with a homozygous nonsense mutation in CIDEC.</title>
        <authorList>
            <consortium name="LD Screening Consortium"/>
            <person name="Rubio-Cabezas O."/>
            <person name="Puri V."/>
            <person name="Murano I."/>
            <person name="Saudek V."/>
            <person name="Semple R.K."/>
            <person name="Dash S."/>
            <person name="Hyden C.S."/>
            <person name="Bottomley W."/>
            <person name="Vigouroux C."/>
            <person name="Magre J."/>
            <person name="Raymond-Barker P."/>
            <person name="Murgatroyd P.R."/>
            <person name="Chawla A."/>
            <person name="Skepper J.N."/>
            <person name="Chatterjee V.K."/>
            <person name="Suliman S."/>
            <person name="Patch A.M."/>
            <person name="Agarwal A.K."/>
            <person name="Garg A."/>
            <person name="Barroso I."/>
            <person name="Cinti S."/>
            <person name="Czech M.P."/>
            <person name="Argente J."/>
            <person name="O'Rahilly S."/>
            <person name="Savage D.B."/>
        </authorList>
    </citation>
    <scope>FUNCTION</scope>
    <scope>INVOLVEMENT IN FPLD5</scope>
</reference>
<reference key="10">
    <citation type="journal article" date="2013" name="Biochem. Biophys. Res. Commun.">
        <title>FSP27 and PLIN1 interaction promotes the formation of large lipid droplets in human adipocytes.</title>
        <authorList>
            <person name="Grahn T.H."/>
            <person name="Zhang Y."/>
            <person name="Lee M.J."/>
            <person name="Sommer A.G."/>
            <person name="Mostoslavsky G."/>
            <person name="Fried S.K."/>
            <person name="Greenberg A.S."/>
            <person name="Puri V."/>
        </authorList>
    </citation>
    <scope>FUNCTION IN UNILOCULAR LIPID DROPLET FORMATION AND LIPOLYSIS</scope>
    <scope>INTERACTION WITH PLIN1</scope>
    <scope>SUBCELLULAR LOCATION</scope>
</reference>
<reference key="11">
    <citation type="journal article" date="2018" name="J. Biol. Chem.">
        <title>Polybasic RKKR motif in the linker region of lipid droplet (LD)-associated protein CIDEC inhibits LD fusion activity by interacting with acidic phospholipids.</title>
        <authorList>
            <person name="Wang J."/>
            <person name="Yan C."/>
            <person name="Xu C."/>
            <person name="Chua B.T."/>
            <person name="Li P."/>
            <person name="Chen F.J."/>
        </authorList>
    </citation>
    <scope>FUNCTION</scope>
    <scope>MUTAGENESIS OF ARG-125</scope>
</reference>
<gene>
    <name evidence="15 18" type="primary">CIDEC</name>
    <name evidence="14" type="synonym">FSP27</name>
</gene>
<proteinExistence type="evidence at protein level"/>
<protein>
    <recommendedName>
        <fullName evidence="17">Lipid transferase CIDEC</fullName>
    </recommendedName>
    <alternativeName>
        <fullName evidence="11">Cell death activator CIDE-3</fullName>
    </alternativeName>
    <alternativeName>
        <fullName evidence="17">Cell death-inducing DFFA-like effector protein C</fullName>
    </alternativeName>
    <alternativeName>
        <fullName evidence="14">Fat-specific protein FSP27 homolog</fullName>
    </alternativeName>
</protein>
<name>CIDEC_HUMAN</name>
<evidence type="ECO:0000250" key="1">
    <source>
        <dbReference type="UniProtKB" id="P56198"/>
    </source>
</evidence>
<evidence type="ECO:0000250" key="2">
    <source>
        <dbReference type="UniProtKB" id="Q5XI33"/>
    </source>
</evidence>
<evidence type="ECO:0000255" key="3">
    <source>
        <dbReference type="PROSITE-ProRule" id="PRU00447"/>
    </source>
</evidence>
<evidence type="ECO:0000269" key="4">
    <source>
    </source>
</evidence>
<evidence type="ECO:0000269" key="5">
    <source>
    </source>
</evidence>
<evidence type="ECO:0000269" key="6">
    <source>
    </source>
</evidence>
<evidence type="ECO:0000269" key="7">
    <source>
    </source>
</evidence>
<evidence type="ECO:0000269" key="8">
    <source>
    </source>
</evidence>
<evidence type="ECO:0000269" key="9">
    <source>
    </source>
</evidence>
<evidence type="ECO:0000269" key="10">
    <source>
    </source>
</evidence>
<evidence type="ECO:0000303" key="11">
    <source>
    </source>
</evidence>
<evidence type="ECO:0000303" key="12">
    <source>
    </source>
</evidence>
<evidence type="ECO:0000303" key="13">
    <source>
    </source>
</evidence>
<evidence type="ECO:0000303" key="14">
    <source>
    </source>
</evidence>
<evidence type="ECO:0000303" key="15">
    <source>
    </source>
</evidence>
<evidence type="ECO:0000303" key="16">
    <source ref="2"/>
</evidence>
<evidence type="ECO:0000305" key="17"/>
<evidence type="ECO:0000312" key="18">
    <source>
        <dbReference type="HGNC" id="HGNC:24229"/>
    </source>
</evidence>
<feature type="chain" id="PRO_0000144722" description="Lipid transferase CIDEC">
    <location>
        <begin position="1"/>
        <end position="238"/>
    </location>
</feature>
<feature type="domain" description="CIDE-N" evidence="3">
    <location>
        <begin position="41"/>
        <end position="118"/>
    </location>
</feature>
<feature type="region of interest" description="Required for liquid-liquid phase separation (LLPS)" evidence="1">
    <location>
        <begin position="1"/>
        <end position="35"/>
    </location>
</feature>
<feature type="splice variant" id="VSP_012738" description="In isoform 2." evidence="11 12">
    <location>
        <begin position="1"/>
        <end position="74"/>
    </location>
</feature>
<feature type="splice variant" id="VSP_045051" description="In isoform 4." evidence="13">
    <original>K</original>
    <variation>KTRNPEARSQE</variation>
    <location>
        <position position="69"/>
    </location>
</feature>
<feature type="splice variant" id="VSP_012739" description="In isoform 3." evidence="16">
    <original>VRDTLMLADKPFFLVLEEDGTTVETEEYFQALAGDTVFMVLQKGQKWQPPSEQGTRHPLS</original>
    <variation>GSFPLGPLQHAGHRPRTAWHLLLPAAAPRCYGGRAAPQGQGLIPYPDLSEDTAVKAQVLG</variation>
    <location>
        <begin position="70"/>
        <end position="129"/>
    </location>
</feature>
<feature type="splice variant" id="VSP_012740" description="In isoform 3." evidence="16">
    <location>
        <begin position="130"/>
        <end position="238"/>
    </location>
</feature>
<feature type="mutagenesis site" description="Does not affect ability to mediate lipid droplet fusion." evidence="10">
    <original>R</original>
    <variation>A</variation>
    <variation>Q</variation>
    <location>
        <position position="125"/>
    </location>
</feature>
<feature type="sequence conflict" description="In Ref. 4; CD518729." evidence="17" ref="4">
    <original>K</original>
    <variation>N</variation>
    <location>
        <position position="149"/>
    </location>
</feature>